<organism>
    <name type="scientific">Xenopus laevis</name>
    <name type="common">African clawed frog</name>
    <dbReference type="NCBI Taxonomy" id="8355"/>
    <lineage>
        <taxon>Eukaryota</taxon>
        <taxon>Metazoa</taxon>
        <taxon>Chordata</taxon>
        <taxon>Craniata</taxon>
        <taxon>Vertebrata</taxon>
        <taxon>Euteleostomi</taxon>
        <taxon>Amphibia</taxon>
        <taxon>Batrachia</taxon>
        <taxon>Anura</taxon>
        <taxon>Pipoidea</taxon>
        <taxon>Pipidae</taxon>
        <taxon>Xenopodinae</taxon>
        <taxon>Xenopus</taxon>
        <taxon>Xenopus</taxon>
    </lineage>
</organism>
<feature type="chain" id="PRO_0000365398" description="Eukaryotic translation initiation factor 3 subunit G-A">
    <location>
        <begin position="1"/>
        <end position="308"/>
    </location>
</feature>
<feature type="domain" description="RRM" evidence="1">
    <location>
        <begin position="227"/>
        <end position="305"/>
    </location>
</feature>
<feature type="region of interest" description="Disordered" evidence="2">
    <location>
        <begin position="1"/>
        <end position="35"/>
    </location>
</feature>
<feature type="region of interest" description="Disordered" evidence="2">
    <location>
        <begin position="177"/>
        <end position="226"/>
    </location>
</feature>
<feature type="compositionally biased region" description="Low complexity" evidence="2">
    <location>
        <begin position="185"/>
        <end position="194"/>
    </location>
</feature>
<feature type="compositionally biased region" description="Basic and acidic residues" evidence="2">
    <location>
        <begin position="209"/>
        <end position="226"/>
    </location>
</feature>
<sequence length="308" mass="34365">MPTGDYDSKPSWADQVEEEGIDAEPLSPQIRKPDPVSFVLDTPREVINGNIKTITEYKLNDDDKTVKIVRTFKIETVKASKVVAQRKNWKKFGNSEYDPPGPNVATTTVSDDVLMTFITNKEDLNNQEEEDPMNKLKGQKIVSCRICKGDHWTTRCPYKDTLGPMQKELAEQLGLSTGDKEKAPGAEPEPAQAPVSKTGKYVPPSLRDGGSRRGESMQPNRRADDNATIRVTNLSEDTRETDLQELFRPFGSISRIYLAKDKTTGQSKGFAFISFHRREDAARAIAGVSGFGYDHLILNVEWAKPSTN</sequence>
<proteinExistence type="evidence at transcript level"/>
<reference key="1">
    <citation type="submission" date="2004-06" db="EMBL/GenBank/DDBJ databases">
        <authorList>
            <consortium name="NIH - Xenopus Gene Collection (XGC) project"/>
        </authorList>
    </citation>
    <scope>NUCLEOTIDE SEQUENCE [LARGE SCALE MRNA]</scope>
    <source>
        <tissue>Kidney</tissue>
    </source>
</reference>
<gene>
    <name type="primary">eif3g-a</name>
    <name type="synonym">eif3s4-a</name>
</gene>
<accession>Q6DJI8</accession>
<protein>
    <recommendedName>
        <fullName evidence="1">Eukaryotic translation initiation factor 3 subunit G-A</fullName>
        <shortName evidence="1">eIF3g-A</shortName>
    </recommendedName>
    <alternativeName>
        <fullName evidence="1">Eukaryotic translation initiation factor 3 RNA-binding subunit A</fullName>
        <shortName evidence="1">eIF-3 RNA-binding subunit A</shortName>
    </alternativeName>
    <alternativeName>
        <fullName evidence="1">Eukaryotic translation initiation factor 3 subunit 4-A</fullName>
    </alternativeName>
</protein>
<keyword id="KW-0963">Cytoplasm</keyword>
<keyword id="KW-0396">Initiation factor</keyword>
<keyword id="KW-0648">Protein biosynthesis</keyword>
<keyword id="KW-1185">Reference proteome</keyword>
<keyword id="KW-0694">RNA-binding</keyword>
<comment type="function">
    <text evidence="1">RNA-binding component of the eukaryotic translation initiation factor 3 (eIF-3) complex, which is involved in protein synthesis of a specialized repertoire of mRNAs and, together with other initiation factors, stimulates binding of mRNA and methionyl-tRNAi to the 40S ribosome. The eIF-3 complex specifically targets and initiates translation of a subset of mRNAs involved in cell proliferation. This subunit can bind 18S rRNA.</text>
</comment>
<comment type="subunit">
    <text evidence="1">Component of the eukaryotic translation initiation factor 3 (eIF-3) complex, which is composed of 13 subunits: eif3a, eif3b, eif3c, eif3d, eif3e, eif3f, eif3g, eif3h, eif3i, eif3j, eif3k, eif3l and eif3m.</text>
</comment>
<comment type="subcellular location">
    <subcellularLocation>
        <location evidence="1">Cytoplasm</location>
    </subcellularLocation>
</comment>
<comment type="similarity">
    <text evidence="1">Belongs to the eIF-3 subunit G family.</text>
</comment>
<name>EI3GA_XENLA</name>
<dbReference type="EMBL" id="BC075190">
    <property type="protein sequence ID" value="AAH75190.1"/>
    <property type="molecule type" value="mRNA"/>
</dbReference>
<dbReference type="RefSeq" id="NP_001086477.1">
    <property type="nucleotide sequence ID" value="NM_001093008.1"/>
</dbReference>
<dbReference type="SMR" id="Q6DJI8"/>
<dbReference type="BioGRID" id="103171">
    <property type="interactions" value="2"/>
</dbReference>
<dbReference type="IntAct" id="Q6DJI8">
    <property type="interactions" value="1"/>
</dbReference>
<dbReference type="DNASU" id="446311"/>
<dbReference type="GeneID" id="446311"/>
<dbReference type="KEGG" id="xla:446311"/>
<dbReference type="AGR" id="Xenbase:XB-GENE-6251503"/>
<dbReference type="CTD" id="446311"/>
<dbReference type="Xenbase" id="XB-GENE-6251503">
    <property type="gene designation" value="eif3g.S"/>
</dbReference>
<dbReference type="OMA" id="ICQGDHF"/>
<dbReference type="OrthoDB" id="1749473at2759"/>
<dbReference type="Proteomes" id="UP000186698">
    <property type="component" value="Chromosome 3S"/>
</dbReference>
<dbReference type="Bgee" id="446311">
    <property type="expression patterns" value="Expressed in testis and 19 other cell types or tissues"/>
</dbReference>
<dbReference type="GO" id="GO:0016282">
    <property type="term" value="C:eukaryotic 43S preinitiation complex"/>
    <property type="evidence" value="ECO:0007669"/>
    <property type="project" value="UniProtKB-UniRule"/>
</dbReference>
<dbReference type="GO" id="GO:0033290">
    <property type="term" value="C:eukaryotic 48S preinitiation complex"/>
    <property type="evidence" value="ECO:0007669"/>
    <property type="project" value="UniProtKB-UniRule"/>
</dbReference>
<dbReference type="GO" id="GO:0005852">
    <property type="term" value="C:eukaryotic translation initiation factor 3 complex"/>
    <property type="evidence" value="ECO:0000250"/>
    <property type="project" value="UniProtKB"/>
</dbReference>
<dbReference type="GO" id="GO:0003723">
    <property type="term" value="F:RNA binding"/>
    <property type="evidence" value="ECO:0007669"/>
    <property type="project" value="UniProtKB-UniRule"/>
</dbReference>
<dbReference type="GO" id="GO:0003743">
    <property type="term" value="F:translation initiation factor activity"/>
    <property type="evidence" value="ECO:0007669"/>
    <property type="project" value="UniProtKB-UniRule"/>
</dbReference>
<dbReference type="GO" id="GO:0001732">
    <property type="term" value="P:formation of cytoplasmic translation initiation complex"/>
    <property type="evidence" value="ECO:0007669"/>
    <property type="project" value="UniProtKB-UniRule"/>
</dbReference>
<dbReference type="GO" id="GO:0006413">
    <property type="term" value="P:translational initiation"/>
    <property type="evidence" value="ECO:0000250"/>
    <property type="project" value="UniProtKB"/>
</dbReference>
<dbReference type="CDD" id="cd12933">
    <property type="entry name" value="eIF3G"/>
    <property type="match status" value="1"/>
</dbReference>
<dbReference type="CDD" id="cd12408">
    <property type="entry name" value="RRM_eIF3G_like"/>
    <property type="match status" value="1"/>
</dbReference>
<dbReference type="FunFam" id="3.30.70.330:FF:000194">
    <property type="entry name" value="Eukaryotic translation initiation factor 3 subunit G"/>
    <property type="match status" value="1"/>
</dbReference>
<dbReference type="Gene3D" id="3.30.70.330">
    <property type="match status" value="1"/>
</dbReference>
<dbReference type="HAMAP" id="MF_03006">
    <property type="entry name" value="eIF3g"/>
    <property type="match status" value="1"/>
</dbReference>
<dbReference type="InterPro" id="IPR017334">
    <property type="entry name" value="eIF3_g"/>
</dbReference>
<dbReference type="InterPro" id="IPR024675">
    <property type="entry name" value="eIF3g_N"/>
</dbReference>
<dbReference type="InterPro" id="IPR034240">
    <property type="entry name" value="eIF3G_RRM"/>
</dbReference>
<dbReference type="InterPro" id="IPR012677">
    <property type="entry name" value="Nucleotide-bd_a/b_plait_sf"/>
</dbReference>
<dbReference type="InterPro" id="IPR035979">
    <property type="entry name" value="RBD_domain_sf"/>
</dbReference>
<dbReference type="InterPro" id="IPR000504">
    <property type="entry name" value="RRM_dom"/>
</dbReference>
<dbReference type="PANTHER" id="PTHR10352">
    <property type="entry name" value="EUKARYOTIC TRANSLATION INITIATION FACTOR 3 SUBUNIT G"/>
    <property type="match status" value="1"/>
</dbReference>
<dbReference type="Pfam" id="PF12353">
    <property type="entry name" value="eIF3g"/>
    <property type="match status" value="1"/>
</dbReference>
<dbReference type="Pfam" id="PF00076">
    <property type="entry name" value="RRM_1"/>
    <property type="match status" value="1"/>
</dbReference>
<dbReference type="PIRSF" id="PIRSF037949">
    <property type="entry name" value="Transl_init_eIF-3_RNA-bind"/>
    <property type="match status" value="1"/>
</dbReference>
<dbReference type="SMART" id="SM00360">
    <property type="entry name" value="RRM"/>
    <property type="match status" value="1"/>
</dbReference>
<dbReference type="SUPFAM" id="SSF54928">
    <property type="entry name" value="RNA-binding domain, RBD"/>
    <property type="match status" value="1"/>
</dbReference>
<dbReference type="PROSITE" id="PS50102">
    <property type="entry name" value="RRM"/>
    <property type="match status" value="1"/>
</dbReference>
<evidence type="ECO:0000255" key="1">
    <source>
        <dbReference type="HAMAP-Rule" id="MF_03006"/>
    </source>
</evidence>
<evidence type="ECO:0000256" key="2">
    <source>
        <dbReference type="SAM" id="MobiDB-lite"/>
    </source>
</evidence>